<protein>
    <recommendedName>
        <fullName evidence="1">Large ribosomal subunit protein uL11</fullName>
    </recommendedName>
    <alternativeName>
        <fullName evidence="2">50S ribosomal protein L11</fullName>
    </alternativeName>
</protein>
<comment type="function">
    <text evidence="1">Forms part of the ribosomal stalk which helps the ribosome interact with GTP-bound translation factors.</text>
</comment>
<comment type="subunit">
    <text evidence="1">Part of the ribosomal stalk of the 50S ribosomal subunit. Interacts with L10 and the large rRNA to form the base of the stalk. L10 forms an elongated spine to which L12 dimers bind in a sequential fashion forming a multimeric L10(L12)X complex.</text>
</comment>
<comment type="PTM">
    <text evidence="1">One or more lysine residues are methylated.</text>
</comment>
<comment type="similarity">
    <text evidence="1">Belongs to the universal ribosomal protein uL11 family.</text>
</comment>
<sequence>MAKKVANIVKLQIPAGKATPAPPVGPALGQAGINIMGFTKDFNARTADQAGMIIPVVITVYEDRSFDFVTKTPPAAVLLKKAAGVEHGSGEPNTKKVAKVTKDQVKEIAETKMQDLNAADVEAAMRMVEGTARSMGFEVEG</sequence>
<proteinExistence type="inferred from homology"/>
<evidence type="ECO:0000255" key="1">
    <source>
        <dbReference type="HAMAP-Rule" id="MF_00736"/>
    </source>
</evidence>
<evidence type="ECO:0000305" key="2"/>
<dbReference type="EMBL" id="FM177140">
    <property type="protein sequence ID" value="CAQ67528.1"/>
    <property type="molecule type" value="Genomic_DNA"/>
</dbReference>
<dbReference type="SMR" id="B3WA09"/>
<dbReference type="KEGG" id="lcb:LCABL_24620"/>
<dbReference type="HOGENOM" id="CLU_074237_2_1_9"/>
<dbReference type="GO" id="GO:0022625">
    <property type="term" value="C:cytosolic large ribosomal subunit"/>
    <property type="evidence" value="ECO:0007669"/>
    <property type="project" value="TreeGrafter"/>
</dbReference>
<dbReference type="GO" id="GO:0070180">
    <property type="term" value="F:large ribosomal subunit rRNA binding"/>
    <property type="evidence" value="ECO:0007669"/>
    <property type="project" value="UniProtKB-UniRule"/>
</dbReference>
<dbReference type="GO" id="GO:0003735">
    <property type="term" value="F:structural constituent of ribosome"/>
    <property type="evidence" value="ECO:0007669"/>
    <property type="project" value="InterPro"/>
</dbReference>
<dbReference type="GO" id="GO:0006412">
    <property type="term" value="P:translation"/>
    <property type="evidence" value="ECO:0007669"/>
    <property type="project" value="UniProtKB-UniRule"/>
</dbReference>
<dbReference type="CDD" id="cd00349">
    <property type="entry name" value="Ribosomal_L11"/>
    <property type="match status" value="1"/>
</dbReference>
<dbReference type="FunFam" id="1.10.10.250:FF:000001">
    <property type="entry name" value="50S ribosomal protein L11"/>
    <property type="match status" value="1"/>
</dbReference>
<dbReference type="FunFam" id="3.30.1550.10:FF:000001">
    <property type="entry name" value="50S ribosomal protein L11"/>
    <property type="match status" value="1"/>
</dbReference>
<dbReference type="Gene3D" id="1.10.10.250">
    <property type="entry name" value="Ribosomal protein L11, C-terminal domain"/>
    <property type="match status" value="1"/>
</dbReference>
<dbReference type="Gene3D" id="3.30.1550.10">
    <property type="entry name" value="Ribosomal protein L11/L12, N-terminal domain"/>
    <property type="match status" value="1"/>
</dbReference>
<dbReference type="HAMAP" id="MF_00736">
    <property type="entry name" value="Ribosomal_uL11"/>
    <property type="match status" value="1"/>
</dbReference>
<dbReference type="InterPro" id="IPR000911">
    <property type="entry name" value="Ribosomal_uL11"/>
</dbReference>
<dbReference type="InterPro" id="IPR006519">
    <property type="entry name" value="Ribosomal_uL11_bac-typ"/>
</dbReference>
<dbReference type="InterPro" id="IPR020783">
    <property type="entry name" value="Ribosomal_uL11_C"/>
</dbReference>
<dbReference type="InterPro" id="IPR036769">
    <property type="entry name" value="Ribosomal_uL11_C_sf"/>
</dbReference>
<dbReference type="InterPro" id="IPR020785">
    <property type="entry name" value="Ribosomal_uL11_CS"/>
</dbReference>
<dbReference type="InterPro" id="IPR020784">
    <property type="entry name" value="Ribosomal_uL11_N"/>
</dbReference>
<dbReference type="InterPro" id="IPR036796">
    <property type="entry name" value="Ribosomal_uL11_N_sf"/>
</dbReference>
<dbReference type="NCBIfam" id="TIGR01632">
    <property type="entry name" value="L11_bact"/>
    <property type="match status" value="1"/>
</dbReference>
<dbReference type="PANTHER" id="PTHR11661">
    <property type="entry name" value="60S RIBOSOMAL PROTEIN L12"/>
    <property type="match status" value="1"/>
</dbReference>
<dbReference type="PANTHER" id="PTHR11661:SF1">
    <property type="entry name" value="LARGE RIBOSOMAL SUBUNIT PROTEIN UL11M"/>
    <property type="match status" value="1"/>
</dbReference>
<dbReference type="Pfam" id="PF00298">
    <property type="entry name" value="Ribosomal_L11"/>
    <property type="match status" value="1"/>
</dbReference>
<dbReference type="Pfam" id="PF03946">
    <property type="entry name" value="Ribosomal_L11_N"/>
    <property type="match status" value="1"/>
</dbReference>
<dbReference type="SMART" id="SM00649">
    <property type="entry name" value="RL11"/>
    <property type="match status" value="1"/>
</dbReference>
<dbReference type="SUPFAM" id="SSF54747">
    <property type="entry name" value="Ribosomal L11/L12e N-terminal domain"/>
    <property type="match status" value="1"/>
</dbReference>
<dbReference type="SUPFAM" id="SSF46906">
    <property type="entry name" value="Ribosomal protein L11, C-terminal domain"/>
    <property type="match status" value="1"/>
</dbReference>
<dbReference type="PROSITE" id="PS00359">
    <property type="entry name" value="RIBOSOMAL_L11"/>
    <property type="match status" value="1"/>
</dbReference>
<reference key="1">
    <citation type="submission" date="2008-06" db="EMBL/GenBank/DDBJ databases">
        <title>Lactobacillus casei BL23 complete genome sequence.</title>
        <authorList>
            <person name="Maze A."/>
            <person name="Boel G."/>
            <person name="Bourand A."/>
            <person name="Loux V."/>
            <person name="Gibrat J.F."/>
            <person name="Zuniga M."/>
            <person name="Hartke A."/>
            <person name="Deutscher J."/>
        </authorList>
    </citation>
    <scope>NUCLEOTIDE SEQUENCE [LARGE SCALE GENOMIC DNA]</scope>
    <source>
        <strain>BL23</strain>
    </source>
</reference>
<gene>
    <name evidence="1" type="primary">rplK</name>
    <name type="ordered locus">LCABL_24620</name>
</gene>
<organism>
    <name type="scientific">Lacticaseibacillus casei (strain BL23)</name>
    <name type="common">Lactobacillus casei</name>
    <dbReference type="NCBI Taxonomy" id="543734"/>
    <lineage>
        <taxon>Bacteria</taxon>
        <taxon>Bacillati</taxon>
        <taxon>Bacillota</taxon>
        <taxon>Bacilli</taxon>
        <taxon>Lactobacillales</taxon>
        <taxon>Lactobacillaceae</taxon>
        <taxon>Lacticaseibacillus</taxon>
    </lineage>
</organism>
<accession>B3WA09</accession>
<name>RL11_LACCB</name>
<feature type="chain" id="PRO_1000195656" description="Large ribosomal subunit protein uL11">
    <location>
        <begin position="1"/>
        <end position="141"/>
    </location>
</feature>
<keyword id="KW-0488">Methylation</keyword>
<keyword id="KW-0687">Ribonucleoprotein</keyword>
<keyword id="KW-0689">Ribosomal protein</keyword>
<keyword id="KW-0694">RNA-binding</keyword>
<keyword id="KW-0699">rRNA-binding</keyword>